<dbReference type="EMBL" id="CP000948">
    <property type="protein sequence ID" value="ACB02098.1"/>
    <property type="molecule type" value="Genomic_DNA"/>
</dbReference>
<dbReference type="RefSeq" id="WP_000109259.1">
    <property type="nucleotide sequence ID" value="NC_010473.1"/>
</dbReference>
<dbReference type="SMR" id="B1X838"/>
<dbReference type="KEGG" id="ecd:ECDH10B_0968"/>
<dbReference type="HOGENOM" id="CLU_035018_1_2_6"/>
<dbReference type="GO" id="GO:0005886">
    <property type="term" value="C:plasma membrane"/>
    <property type="evidence" value="ECO:0007669"/>
    <property type="project" value="UniProtKB-SubCell"/>
</dbReference>
<dbReference type="GO" id="GO:0022857">
    <property type="term" value="F:transmembrane transporter activity"/>
    <property type="evidence" value="ECO:0007669"/>
    <property type="project" value="UniProtKB-UniRule"/>
</dbReference>
<dbReference type="CDD" id="cd17477">
    <property type="entry name" value="MFS_YcaD_like"/>
    <property type="match status" value="1"/>
</dbReference>
<dbReference type="FunFam" id="1.20.1250.20:FF:000041">
    <property type="entry name" value="Uncharacterized MFS-type transporter YcaD"/>
    <property type="match status" value="1"/>
</dbReference>
<dbReference type="FunFam" id="1.20.1250.20:FF:000066">
    <property type="entry name" value="Uncharacterized MFS-type transporter YcaD"/>
    <property type="match status" value="1"/>
</dbReference>
<dbReference type="Gene3D" id="1.20.1250.20">
    <property type="entry name" value="MFS general substrate transporter like domains"/>
    <property type="match status" value="2"/>
</dbReference>
<dbReference type="HAMAP" id="MF_01149">
    <property type="entry name" value="MFS_YcaD"/>
    <property type="match status" value="1"/>
</dbReference>
<dbReference type="InterPro" id="IPR011701">
    <property type="entry name" value="MFS"/>
</dbReference>
<dbReference type="InterPro" id="IPR020846">
    <property type="entry name" value="MFS_dom"/>
</dbReference>
<dbReference type="InterPro" id="IPR036259">
    <property type="entry name" value="MFS_trans_sf"/>
</dbReference>
<dbReference type="InterPro" id="IPR023745">
    <property type="entry name" value="MFS_YcaD"/>
</dbReference>
<dbReference type="InterPro" id="IPR047200">
    <property type="entry name" value="MFS_YcaD-like"/>
</dbReference>
<dbReference type="NCBIfam" id="NF002962">
    <property type="entry name" value="PRK03633.1"/>
    <property type="match status" value="1"/>
</dbReference>
<dbReference type="PANTHER" id="PTHR23521">
    <property type="entry name" value="TRANSPORTER MFS SUPERFAMILY"/>
    <property type="match status" value="1"/>
</dbReference>
<dbReference type="PANTHER" id="PTHR23521:SF2">
    <property type="entry name" value="TRANSPORTER MFS SUPERFAMILY"/>
    <property type="match status" value="1"/>
</dbReference>
<dbReference type="Pfam" id="PF07690">
    <property type="entry name" value="MFS_1"/>
    <property type="match status" value="1"/>
</dbReference>
<dbReference type="SUPFAM" id="SSF103473">
    <property type="entry name" value="MFS general substrate transporter"/>
    <property type="match status" value="1"/>
</dbReference>
<dbReference type="PROSITE" id="PS50850">
    <property type="entry name" value="MFS"/>
    <property type="match status" value="1"/>
</dbReference>
<keyword id="KW-0997">Cell inner membrane</keyword>
<keyword id="KW-1003">Cell membrane</keyword>
<keyword id="KW-0472">Membrane</keyword>
<keyword id="KW-0812">Transmembrane</keyword>
<keyword id="KW-1133">Transmembrane helix</keyword>
<keyword id="KW-0813">Transport</keyword>
<accession>B1X838</accession>
<evidence type="ECO:0000255" key="1">
    <source>
        <dbReference type="HAMAP-Rule" id="MF_01149"/>
    </source>
</evidence>
<reference key="1">
    <citation type="journal article" date="2008" name="J. Bacteriol.">
        <title>The complete genome sequence of Escherichia coli DH10B: insights into the biology of a laboratory workhorse.</title>
        <authorList>
            <person name="Durfee T."/>
            <person name="Nelson R."/>
            <person name="Baldwin S."/>
            <person name="Plunkett G. III"/>
            <person name="Burland V."/>
            <person name="Mau B."/>
            <person name="Petrosino J.F."/>
            <person name="Qin X."/>
            <person name="Muzny D.M."/>
            <person name="Ayele M."/>
            <person name="Gibbs R.A."/>
            <person name="Csorgo B."/>
            <person name="Posfai G."/>
            <person name="Weinstock G.M."/>
            <person name="Blattner F.R."/>
        </authorList>
    </citation>
    <scope>NUCLEOTIDE SEQUENCE [LARGE SCALE GENOMIC DNA]</scope>
    <source>
        <strain>K12 / DH10B</strain>
    </source>
</reference>
<gene>
    <name evidence="1" type="primary">ycaD</name>
    <name type="ordered locus">ECDH10B_0968</name>
</gene>
<organism>
    <name type="scientific">Escherichia coli (strain K12 / DH10B)</name>
    <dbReference type="NCBI Taxonomy" id="316385"/>
    <lineage>
        <taxon>Bacteria</taxon>
        <taxon>Pseudomonadati</taxon>
        <taxon>Pseudomonadota</taxon>
        <taxon>Gammaproteobacteria</taxon>
        <taxon>Enterobacterales</taxon>
        <taxon>Enterobacteriaceae</taxon>
        <taxon>Escherichia</taxon>
    </lineage>
</organism>
<feature type="chain" id="PRO_1000137487" description="Uncharacterized MFS-type transporter YcaD">
    <location>
        <begin position="1"/>
        <end position="382"/>
    </location>
</feature>
<feature type="transmembrane region" description="Helical" evidence="1">
    <location>
        <begin position="14"/>
        <end position="34"/>
    </location>
</feature>
<feature type="transmembrane region" description="Helical" evidence="1">
    <location>
        <begin position="45"/>
        <end position="65"/>
    </location>
</feature>
<feature type="transmembrane region" description="Helical" evidence="1">
    <location>
        <begin position="79"/>
        <end position="99"/>
    </location>
</feature>
<feature type="transmembrane region" description="Helical" evidence="1">
    <location>
        <begin position="102"/>
        <end position="122"/>
    </location>
</feature>
<feature type="transmembrane region" description="Helical" evidence="1">
    <location>
        <begin position="131"/>
        <end position="151"/>
    </location>
</feature>
<feature type="transmembrane region" description="Helical" evidence="1">
    <location>
        <begin position="157"/>
        <end position="177"/>
    </location>
</feature>
<feature type="transmembrane region" description="Helical" evidence="1">
    <location>
        <begin position="204"/>
        <end position="224"/>
    </location>
</feature>
<feature type="transmembrane region" description="Helical" evidence="1">
    <location>
        <begin position="235"/>
        <end position="255"/>
    </location>
</feature>
<feature type="transmembrane region" description="Helical" evidence="1">
    <location>
        <begin position="270"/>
        <end position="290"/>
    </location>
</feature>
<feature type="transmembrane region" description="Helical" evidence="1">
    <location>
        <begin position="291"/>
        <end position="311"/>
    </location>
</feature>
<feature type="transmembrane region" description="Helical" evidence="1">
    <location>
        <begin position="325"/>
        <end position="345"/>
    </location>
</feature>
<feature type="transmembrane region" description="Helical" evidence="1">
    <location>
        <begin position="348"/>
        <end position="368"/>
    </location>
</feature>
<comment type="subcellular location">
    <subcellularLocation>
        <location evidence="1">Cell inner membrane</location>
        <topology evidence="1">Multi-pass membrane protein</topology>
    </subcellularLocation>
</comment>
<comment type="similarity">
    <text evidence="1">Belongs to the major facilitator superfamily. YcaD (TC 2.A.1.26) family.</text>
</comment>
<name>YCAD_ECODH</name>
<proteinExistence type="inferred from homology"/>
<protein>
    <recommendedName>
        <fullName evidence="1">Uncharacterized MFS-type transporter YcaD</fullName>
    </recommendedName>
</protein>
<sequence length="382" mass="41432">MSTYTQPVMLLLSGLLLLTLAIAVLNTLVPLWLAQEHMSTWQVGVVSSSYFTGNLVGTLLTGYVIKRIGFNRSYYLASFIFAAGCAGLGLMIGFWSWLAWRFVAGVGCAMIWVVVESALMCSGTSRNRGRLLAAYMMVYYVGTFLGQLLVSKVSTELMSVLPWVTGLTLAGILPLLFTRVLNQQAENHDSTSITSMLKLRQARLGVNGCIISGIVLGSLYGLMPLYLNHKGVSNASIGFWMAVLVSAGILGQWPIGRLADKFGRLLVLRVQVFVVILGSIAMLSQAAMAPALFILGAAGFTLYPVAMAWACEKVEHHQLVAMNQALLLSYTVGSLLGPSFTAMLMQNFSDNLLFIMIASVSFIYLLMLLRNAGHTPKPVAHV</sequence>